<evidence type="ECO:0000255" key="1">
    <source>
        <dbReference type="HAMAP-Rule" id="MF_00739"/>
    </source>
</evidence>
<feature type="chain" id="PRO_1000046350" description="Urease subunit gamma">
    <location>
        <begin position="1"/>
        <end position="100"/>
    </location>
</feature>
<keyword id="KW-0963">Cytoplasm</keyword>
<keyword id="KW-0378">Hydrolase</keyword>
<reference key="1">
    <citation type="journal article" date="2007" name="PLoS Genet.">
        <title>Patterns and implications of gene gain and loss in the evolution of Prochlorococcus.</title>
        <authorList>
            <person name="Kettler G.C."/>
            <person name="Martiny A.C."/>
            <person name="Huang K."/>
            <person name="Zucker J."/>
            <person name="Coleman M.L."/>
            <person name="Rodrigue S."/>
            <person name="Chen F."/>
            <person name="Lapidus A."/>
            <person name="Ferriera S."/>
            <person name="Johnson J."/>
            <person name="Steglich C."/>
            <person name="Church G.M."/>
            <person name="Richardson P."/>
            <person name="Chisholm S.W."/>
        </authorList>
    </citation>
    <scope>NUCLEOTIDE SEQUENCE [LARGE SCALE GENOMIC DNA]</scope>
    <source>
        <strain>MIT 9303</strain>
    </source>
</reference>
<gene>
    <name evidence="1" type="primary">ureA</name>
    <name type="ordered locus">P9303_29791</name>
</gene>
<name>URE3_PROM3</name>
<accession>A2CDZ9</accession>
<proteinExistence type="inferred from homology"/>
<protein>
    <recommendedName>
        <fullName evidence="1">Urease subunit gamma</fullName>
        <ecNumber evidence="1">3.5.1.5</ecNumber>
    </recommendedName>
    <alternativeName>
        <fullName evidence="1">Urea amidohydrolase subunit gamma</fullName>
    </alternativeName>
</protein>
<comment type="catalytic activity">
    <reaction evidence="1">
        <text>urea + 2 H2O + H(+) = hydrogencarbonate + 2 NH4(+)</text>
        <dbReference type="Rhea" id="RHEA:20557"/>
        <dbReference type="ChEBI" id="CHEBI:15377"/>
        <dbReference type="ChEBI" id="CHEBI:15378"/>
        <dbReference type="ChEBI" id="CHEBI:16199"/>
        <dbReference type="ChEBI" id="CHEBI:17544"/>
        <dbReference type="ChEBI" id="CHEBI:28938"/>
        <dbReference type="EC" id="3.5.1.5"/>
    </reaction>
</comment>
<comment type="pathway">
    <text evidence="1">Nitrogen metabolism; urea degradation; CO(2) and NH(3) from urea (urease route): step 1/1.</text>
</comment>
<comment type="subunit">
    <text evidence="1">Heterotrimer of UreA (gamma), UreB (beta) and UreC (alpha) subunits. Three heterotrimers associate to form the active enzyme.</text>
</comment>
<comment type="subcellular location">
    <subcellularLocation>
        <location evidence="1">Cytoplasm</location>
    </subcellularLocation>
</comment>
<comment type="similarity">
    <text evidence="1">Belongs to the urease gamma subunit family.</text>
</comment>
<dbReference type="EC" id="3.5.1.5" evidence="1"/>
<dbReference type="EMBL" id="CP000554">
    <property type="protein sequence ID" value="ABM79709.1"/>
    <property type="molecule type" value="Genomic_DNA"/>
</dbReference>
<dbReference type="RefSeq" id="WP_011827547.1">
    <property type="nucleotide sequence ID" value="NC_008820.1"/>
</dbReference>
<dbReference type="SMR" id="A2CDZ9"/>
<dbReference type="STRING" id="59922.P9303_29791"/>
<dbReference type="KEGG" id="pmf:P9303_29791"/>
<dbReference type="HOGENOM" id="CLU_145825_1_0_3"/>
<dbReference type="BioCyc" id="PMAR59922:G1G80-2615-MONOMER"/>
<dbReference type="UniPathway" id="UPA00258">
    <property type="reaction ID" value="UER00370"/>
</dbReference>
<dbReference type="Proteomes" id="UP000002274">
    <property type="component" value="Chromosome"/>
</dbReference>
<dbReference type="GO" id="GO:0005737">
    <property type="term" value="C:cytoplasm"/>
    <property type="evidence" value="ECO:0007669"/>
    <property type="project" value="UniProtKB-SubCell"/>
</dbReference>
<dbReference type="GO" id="GO:0016151">
    <property type="term" value="F:nickel cation binding"/>
    <property type="evidence" value="ECO:0007669"/>
    <property type="project" value="InterPro"/>
</dbReference>
<dbReference type="GO" id="GO:0009039">
    <property type="term" value="F:urease activity"/>
    <property type="evidence" value="ECO:0007669"/>
    <property type="project" value="UniProtKB-UniRule"/>
</dbReference>
<dbReference type="GO" id="GO:0043419">
    <property type="term" value="P:urea catabolic process"/>
    <property type="evidence" value="ECO:0007669"/>
    <property type="project" value="UniProtKB-UniRule"/>
</dbReference>
<dbReference type="CDD" id="cd00390">
    <property type="entry name" value="Urease_gamma"/>
    <property type="match status" value="1"/>
</dbReference>
<dbReference type="Gene3D" id="3.30.280.10">
    <property type="entry name" value="Urease, gamma-like subunit"/>
    <property type="match status" value="1"/>
</dbReference>
<dbReference type="HAMAP" id="MF_00739">
    <property type="entry name" value="Urease_gamma"/>
    <property type="match status" value="1"/>
</dbReference>
<dbReference type="InterPro" id="IPR012010">
    <property type="entry name" value="Urease_gamma"/>
</dbReference>
<dbReference type="InterPro" id="IPR002026">
    <property type="entry name" value="Urease_gamma/gamma-beta_su"/>
</dbReference>
<dbReference type="InterPro" id="IPR036463">
    <property type="entry name" value="Urease_gamma_sf"/>
</dbReference>
<dbReference type="InterPro" id="IPR050069">
    <property type="entry name" value="Urease_subunit"/>
</dbReference>
<dbReference type="NCBIfam" id="NF009712">
    <property type="entry name" value="PRK13241.1"/>
    <property type="match status" value="1"/>
</dbReference>
<dbReference type="NCBIfam" id="TIGR00193">
    <property type="entry name" value="urease_gam"/>
    <property type="match status" value="1"/>
</dbReference>
<dbReference type="PANTHER" id="PTHR33569">
    <property type="entry name" value="UREASE"/>
    <property type="match status" value="1"/>
</dbReference>
<dbReference type="PANTHER" id="PTHR33569:SF1">
    <property type="entry name" value="UREASE"/>
    <property type="match status" value="1"/>
</dbReference>
<dbReference type="Pfam" id="PF00547">
    <property type="entry name" value="Urease_gamma"/>
    <property type="match status" value="1"/>
</dbReference>
<dbReference type="PIRSF" id="PIRSF001223">
    <property type="entry name" value="Urease_gamma"/>
    <property type="match status" value="1"/>
</dbReference>
<dbReference type="SUPFAM" id="SSF54111">
    <property type="entry name" value="Urease, gamma-subunit"/>
    <property type="match status" value="1"/>
</dbReference>
<organism>
    <name type="scientific">Prochlorococcus marinus (strain MIT 9303)</name>
    <dbReference type="NCBI Taxonomy" id="59922"/>
    <lineage>
        <taxon>Bacteria</taxon>
        <taxon>Bacillati</taxon>
        <taxon>Cyanobacteriota</taxon>
        <taxon>Cyanophyceae</taxon>
        <taxon>Synechococcales</taxon>
        <taxon>Prochlorococcaceae</taxon>
        <taxon>Prochlorococcus</taxon>
    </lineage>
</organism>
<sequence>MHLSPQEKDKLLIVTAALLAERRLKRGLRLNHPEAVAWLSFLVIEGARDGQSVAELMAEGSTWLRRDQVMDGVPELIPEVQIEAVFTDGTKLVTLHDPIR</sequence>